<evidence type="ECO:0000255" key="1">
    <source>
        <dbReference type="HAMAP-Rule" id="MF_01633"/>
    </source>
</evidence>
<proteinExistence type="inferred from homology"/>
<protein>
    <recommendedName>
        <fullName evidence="1">7-cyano-7-deazaguanine synthase</fullName>
        <ecNumber evidence="1">6.3.4.20</ecNumber>
    </recommendedName>
    <alternativeName>
        <fullName evidence="1">7-cyano-7-carbaguanine synthase</fullName>
    </alternativeName>
    <alternativeName>
        <fullName evidence="1">PreQ(0) synthase</fullName>
    </alternativeName>
    <alternativeName>
        <fullName evidence="1">Queuosine biosynthesis protein QueC</fullName>
    </alternativeName>
</protein>
<accession>Q2YSL9</accession>
<dbReference type="EC" id="6.3.4.20" evidence="1"/>
<dbReference type="EMBL" id="AJ938182">
    <property type="protein sequence ID" value="CAI80349.1"/>
    <property type="molecule type" value="Genomic_DNA"/>
</dbReference>
<dbReference type="RefSeq" id="WP_000446723.1">
    <property type="nucleotide sequence ID" value="NC_007622.1"/>
</dbReference>
<dbReference type="SMR" id="Q2YSL9"/>
<dbReference type="KEGG" id="sab:SAB0661c"/>
<dbReference type="HOGENOM" id="CLU_081854_0_0_9"/>
<dbReference type="UniPathway" id="UPA00391"/>
<dbReference type="GO" id="GO:0005524">
    <property type="term" value="F:ATP binding"/>
    <property type="evidence" value="ECO:0007669"/>
    <property type="project" value="UniProtKB-UniRule"/>
</dbReference>
<dbReference type="GO" id="GO:0016879">
    <property type="term" value="F:ligase activity, forming carbon-nitrogen bonds"/>
    <property type="evidence" value="ECO:0007669"/>
    <property type="project" value="UniProtKB-UniRule"/>
</dbReference>
<dbReference type="GO" id="GO:0008270">
    <property type="term" value="F:zinc ion binding"/>
    <property type="evidence" value="ECO:0007669"/>
    <property type="project" value="UniProtKB-UniRule"/>
</dbReference>
<dbReference type="GO" id="GO:0008616">
    <property type="term" value="P:queuosine biosynthetic process"/>
    <property type="evidence" value="ECO:0007669"/>
    <property type="project" value="UniProtKB-UniRule"/>
</dbReference>
<dbReference type="CDD" id="cd01995">
    <property type="entry name" value="QueC-like"/>
    <property type="match status" value="1"/>
</dbReference>
<dbReference type="FunFam" id="3.40.50.620:FF:000017">
    <property type="entry name" value="7-cyano-7-deazaguanine synthase"/>
    <property type="match status" value="1"/>
</dbReference>
<dbReference type="Gene3D" id="3.40.50.620">
    <property type="entry name" value="HUPs"/>
    <property type="match status" value="1"/>
</dbReference>
<dbReference type="HAMAP" id="MF_01633">
    <property type="entry name" value="QueC"/>
    <property type="match status" value="1"/>
</dbReference>
<dbReference type="InterPro" id="IPR018317">
    <property type="entry name" value="QueC"/>
</dbReference>
<dbReference type="InterPro" id="IPR014729">
    <property type="entry name" value="Rossmann-like_a/b/a_fold"/>
</dbReference>
<dbReference type="NCBIfam" id="TIGR00364">
    <property type="entry name" value="7-cyano-7-deazaguanine synthase QueC"/>
    <property type="match status" value="1"/>
</dbReference>
<dbReference type="PANTHER" id="PTHR42914">
    <property type="entry name" value="7-CYANO-7-DEAZAGUANINE SYNTHASE"/>
    <property type="match status" value="1"/>
</dbReference>
<dbReference type="PANTHER" id="PTHR42914:SF1">
    <property type="entry name" value="7-CYANO-7-DEAZAGUANINE SYNTHASE"/>
    <property type="match status" value="1"/>
</dbReference>
<dbReference type="Pfam" id="PF06508">
    <property type="entry name" value="QueC"/>
    <property type="match status" value="1"/>
</dbReference>
<dbReference type="PIRSF" id="PIRSF006293">
    <property type="entry name" value="ExsB"/>
    <property type="match status" value="1"/>
</dbReference>
<dbReference type="SUPFAM" id="SSF52402">
    <property type="entry name" value="Adenine nucleotide alpha hydrolases-like"/>
    <property type="match status" value="1"/>
</dbReference>
<name>QUEC_STAAB</name>
<reference key="1">
    <citation type="journal article" date="2007" name="PLoS ONE">
        <title>Molecular correlates of host specialization in Staphylococcus aureus.</title>
        <authorList>
            <person name="Herron-Olson L."/>
            <person name="Fitzgerald J.R."/>
            <person name="Musser J.M."/>
            <person name="Kapur V."/>
        </authorList>
    </citation>
    <scope>NUCLEOTIDE SEQUENCE [LARGE SCALE GENOMIC DNA]</scope>
    <source>
        <strain>bovine RF122 / ET3-1</strain>
    </source>
</reference>
<organism>
    <name type="scientific">Staphylococcus aureus (strain bovine RF122 / ET3-1)</name>
    <dbReference type="NCBI Taxonomy" id="273036"/>
    <lineage>
        <taxon>Bacteria</taxon>
        <taxon>Bacillati</taxon>
        <taxon>Bacillota</taxon>
        <taxon>Bacilli</taxon>
        <taxon>Bacillales</taxon>
        <taxon>Staphylococcaceae</taxon>
        <taxon>Staphylococcus</taxon>
    </lineage>
</organism>
<gene>
    <name evidence="1" type="primary">queC</name>
    <name type="ordered locus">SAB0661c</name>
</gene>
<comment type="function">
    <text evidence="1">Catalyzes the ATP-dependent conversion of 7-carboxy-7-deazaguanine (CDG) to 7-cyano-7-deazaguanine (preQ(0)).</text>
</comment>
<comment type="catalytic activity">
    <reaction evidence="1">
        <text>7-carboxy-7-deazaguanine + NH4(+) + ATP = 7-cyano-7-deazaguanine + ADP + phosphate + H2O + H(+)</text>
        <dbReference type="Rhea" id="RHEA:27982"/>
        <dbReference type="ChEBI" id="CHEBI:15377"/>
        <dbReference type="ChEBI" id="CHEBI:15378"/>
        <dbReference type="ChEBI" id="CHEBI:28938"/>
        <dbReference type="ChEBI" id="CHEBI:30616"/>
        <dbReference type="ChEBI" id="CHEBI:43474"/>
        <dbReference type="ChEBI" id="CHEBI:45075"/>
        <dbReference type="ChEBI" id="CHEBI:61036"/>
        <dbReference type="ChEBI" id="CHEBI:456216"/>
        <dbReference type="EC" id="6.3.4.20"/>
    </reaction>
</comment>
<comment type="cofactor">
    <cofactor evidence="1">
        <name>Zn(2+)</name>
        <dbReference type="ChEBI" id="CHEBI:29105"/>
    </cofactor>
    <text evidence="1">Binds 1 zinc ion per subunit.</text>
</comment>
<comment type="pathway">
    <text evidence="1">Purine metabolism; 7-cyano-7-deazaguanine biosynthesis.</text>
</comment>
<comment type="subunit">
    <text evidence="1">Homodimer.</text>
</comment>
<comment type="similarity">
    <text evidence="1">Belongs to the QueC family.</text>
</comment>
<sequence length="222" mass="24843">MESVLNNEKAIVVFSGGQDSTTCLFYAKKHFKEVELVTFNYGQRHDTEIEVAKQIAQDQGMKHHVLDMSLLSQLTPNALTQHDMEITNNEDGIPNTFVPARNLLFLSFAGALAYQIGAKHIITGVCETDFSGYPDCRDSFIKSMNVTLSLAMDKDCVIHTPLMWLNKAETWKLSDELEVLDYIRTKTLTCYNGIIGDGCGECPACHLRQRGLNQYLESKGAL</sequence>
<keyword id="KW-0067">ATP-binding</keyword>
<keyword id="KW-0436">Ligase</keyword>
<keyword id="KW-0479">Metal-binding</keyword>
<keyword id="KW-0547">Nucleotide-binding</keyword>
<keyword id="KW-0671">Queuosine biosynthesis</keyword>
<keyword id="KW-0862">Zinc</keyword>
<feature type="chain" id="PRO_0000246928" description="7-cyano-7-deazaguanine synthase">
    <location>
        <begin position="1"/>
        <end position="222"/>
    </location>
</feature>
<feature type="binding site" evidence="1">
    <location>
        <begin position="14"/>
        <end position="24"/>
    </location>
    <ligand>
        <name>ATP</name>
        <dbReference type="ChEBI" id="CHEBI:30616"/>
    </ligand>
</feature>
<feature type="binding site" evidence="1">
    <location>
        <position position="190"/>
    </location>
    <ligand>
        <name>Zn(2+)</name>
        <dbReference type="ChEBI" id="CHEBI:29105"/>
    </ligand>
</feature>
<feature type="binding site" evidence="1">
    <location>
        <position position="199"/>
    </location>
    <ligand>
        <name>Zn(2+)</name>
        <dbReference type="ChEBI" id="CHEBI:29105"/>
    </ligand>
</feature>
<feature type="binding site" evidence="1">
    <location>
        <position position="202"/>
    </location>
    <ligand>
        <name>Zn(2+)</name>
        <dbReference type="ChEBI" id="CHEBI:29105"/>
    </ligand>
</feature>
<feature type="binding site" evidence="1">
    <location>
        <position position="205"/>
    </location>
    <ligand>
        <name>Zn(2+)</name>
        <dbReference type="ChEBI" id="CHEBI:29105"/>
    </ligand>
</feature>